<keyword id="KW-0007">Acetylation</keyword>
<keyword id="KW-0009">Actin-binding</keyword>
<keyword id="KW-0903">Direct protein sequencing</keyword>
<keyword id="KW-0514">Muscle protein</keyword>
<keyword id="KW-0597">Phosphoprotein</keyword>
<keyword id="KW-1185">Reference proteome</keyword>
<organism>
    <name type="scientific">Oryctolagus cuniculus</name>
    <name type="common">Rabbit</name>
    <dbReference type="NCBI Taxonomy" id="9986"/>
    <lineage>
        <taxon>Eukaryota</taxon>
        <taxon>Metazoa</taxon>
        <taxon>Chordata</taxon>
        <taxon>Craniata</taxon>
        <taxon>Vertebrata</taxon>
        <taxon>Euteleostomi</taxon>
        <taxon>Mammalia</taxon>
        <taxon>Eutheria</taxon>
        <taxon>Euarchontoglires</taxon>
        <taxon>Glires</taxon>
        <taxon>Lagomorpha</taxon>
        <taxon>Leporidae</taxon>
        <taxon>Oryctolagus</taxon>
    </lineage>
</organism>
<gene>
    <name type="primary">TNNI1</name>
</gene>
<name>TNNI1_RABIT</name>
<evidence type="ECO:0000250" key="1">
    <source>
        <dbReference type="UniProtKB" id="Q9WUZ5"/>
    </source>
</evidence>
<evidence type="ECO:0000269" key="2">
    <source>
    </source>
</evidence>
<evidence type="ECO:0000305" key="3"/>
<proteinExistence type="evidence at protein level"/>
<accession>P02645</accession>
<sequence>PEVERKSKITASRKLLKSLMLAKAKECQQEHEAREAEKVRYLAERIPALQTRGLSLSALQDLCRQLHAKVEVVDEERYDIEAKCLHNTREIKDLKLKVLDLRGKFKRPPLRRVRVSADAMLRALLGSKHKVSMDLRANLKSVKKEDTEKERPVEVGDWRKNVEAMSGMEGRKKMFDAAKSPTSQ</sequence>
<protein>
    <recommendedName>
        <fullName>Troponin I, slow skeletal muscle</fullName>
    </recommendedName>
    <alternativeName>
        <fullName>Troponin I, slow-twitch isoform</fullName>
    </alternativeName>
</protein>
<reference key="1">
    <citation type="journal article" date="1977" name="Biochem. J.">
        <title>The amino acid sequence of rabbit slow-muscle troponin I.</title>
        <authorList>
            <person name="Grand R.J.A."/>
            <person name="Wilkinson J.M."/>
        </authorList>
    </citation>
    <scope>PROTEIN SEQUENCE</scope>
    <scope>ACETYLATION AT PRO-1</scope>
</reference>
<dbReference type="PIR" id="A03089">
    <property type="entry name" value="TPRBIW"/>
</dbReference>
<dbReference type="SMR" id="P02645"/>
<dbReference type="STRING" id="9986.ENSOCUP00000008977"/>
<dbReference type="iPTMnet" id="P02645"/>
<dbReference type="PaxDb" id="9986-ENSOCUP00000008977"/>
<dbReference type="eggNOG" id="KOG3977">
    <property type="taxonomic scope" value="Eukaryota"/>
</dbReference>
<dbReference type="InParanoid" id="P02645"/>
<dbReference type="Proteomes" id="UP000001811">
    <property type="component" value="Unplaced"/>
</dbReference>
<dbReference type="GO" id="GO:0005861">
    <property type="term" value="C:troponin complex"/>
    <property type="evidence" value="ECO:0007669"/>
    <property type="project" value="InterPro"/>
</dbReference>
<dbReference type="GO" id="GO:0003779">
    <property type="term" value="F:actin binding"/>
    <property type="evidence" value="ECO:0007669"/>
    <property type="project" value="UniProtKB-KW"/>
</dbReference>
<dbReference type="GO" id="GO:0060048">
    <property type="term" value="P:cardiac muscle contraction"/>
    <property type="evidence" value="ECO:0007669"/>
    <property type="project" value="TreeGrafter"/>
</dbReference>
<dbReference type="GO" id="GO:0003009">
    <property type="term" value="P:skeletal muscle contraction"/>
    <property type="evidence" value="ECO:0007669"/>
    <property type="project" value="TreeGrafter"/>
</dbReference>
<dbReference type="FunFam" id="1.20.5.350:FF:000002">
    <property type="entry name" value="troponin I, fast skeletal muscle"/>
    <property type="match status" value="1"/>
</dbReference>
<dbReference type="Gene3D" id="1.20.5.350">
    <property type="match status" value="1"/>
</dbReference>
<dbReference type="Gene3D" id="6.10.250.180">
    <property type="match status" value="1"/>
</dbReference>
<dbReference type="InterPro" id="IPR001978">
    <property type="entry name" value="Troponin"/>
</dbReference>
<dbReference type="InterPro" id="IPR050875">
    <property type="entry name" value="Troponin_I"/>
</dbReference>
<dbReference type="InterPro" id="IPR038077">
    <property type="entry name" value="Troponin_sf"/>
</dbReference>
<dbReference type="PANTHER" id="PTHR13738">
    <property type="entry name" value="TROPONIN I"/>
    <property type="match status" value="1"/>
</dbReference>
<dbReference type="PANTHER" id="PTHR13738:SF9">
    <property type="entry name" value="TROPONIN I, SLOW SKELETAL MUSCLE"/>
    <property type="match status" value="1"/>
</dbReference>
<dbReference type="Pfam" id="PF00992">
    <property type="entry name" value="Troponin"/>
    <property type="match status" value="1"/>
</dbReference>
<dbReference type="SUPFAM" id="SSF90250">
    <property type="entry name" value="Troponin coil-coiled subunits"/>
    <property type="match status" value="1"/>
</dbReference>
<comment type="function">
    <text>Troponin I is the inhibitory subunit of troponin, the thin filament regulatory complex which confers calcium-sensitivity to striated muscle actomyosin ATPase activity.</text>
</comment>
<comment type="subunit">
    <text>Binds to actin and tropomyosin.</text>
</comment>
<comment type="PTM">
    <text>In the muscle sample, approximately 25% of the chains were blocked. Pro-1 is probably acetylated.</text>
</comment>
<comment type="PTM">
    <text>The N-terminus is blocked.</text>
</comment>
<comment type="similarity">
    <text evidence="3">Belongs to the troponin I family.</text>
</comment>
<feature type="chain" id="PRO_0000186141" description="Troponin I, slow skeletal muscle">
    <location>
        <begin position="1"/>
        <end position="184"/>
    </location>
</feature>
<feature type="region of interest" description="Involved in binding TNC">
    <location>
        <begin position="1"/>
        <end position="45"/>
    </location>
</feature>
<feature type="region of interest" description="Involved in binding TNC and actin">
    <location>
        <begin position="94"/>
        <end position="115"/>
    </location>
</feature>
<feature type="modified residue" description="N-acetylproline; partial" evidence="2">
    <location>
        <position position="1"/>
    </location>
</feature>
<feature type="modified residue" description="Phosphoserine" evidence="1">
    <location>
        <position position="55"/>
    </location>
</feature>
<feature type="sequence variant" description="In some molecules.">
    <location>
        <begin position="183"/>
        <end position="184"/>
    </location>
</feature>